<keyword id="KW-0903">Direct protein sequencing</keyword>
<keyword id="KW-0233">DNA recombination</keyword>
<keyword id="KW-0238">DNA-binding</keyword>
<keyword id="KW-1185">Reference proteome</keyword>
<keyword id="KW-0804">Transcription</keyword>
<keyword id="KW-0805">Transcription regulation</keyword>
<keyword id="KW-0810">Translation regulation</keyword>
<proteinExistence type="evidence at protein level"/>
<reference key="1">
    <citation type="journal article" date="1995" name="Gene">
        <title>Cloning and sequence analyses of the genes coding for the integration host factor (IHF) and HU proteins of Pseudomonas aeruginosa.</title>
        <authorList>
            <person name="Delic-Attree I."/>
            <person name="Toussaint B."/>
            <person name="Vignais P.M."/>
        </authorList>
    </citation>
    <scope>NUCLEOTIDE SEQUENCE [GENOMIC DNA]</scope>
</reference>
<reference key="2">
    <citation type="journal article" date="2000" name="Nature">
        <title>Complete genome sequence of Pseudomonas aeruginosa PAO1, an opportunistic pathogen.</title>
        <authorList>
            <person name="Stover C.K."/>
            <person name="Pham X.-Q.T."/>
            <person name="Erwin A.L."/>
            <person name="Mizoguchi S.D."/>
            <person name="Warrener P."/>
            <person name="Hickey M.J."/>
            <person name="Brinkman F.S.L."/>
            <person name="Hufnagle W.O."/>
            <person name="Kowalik D.J."/>
            <person name="Lagrou M."/>
            <person name="Garber R.L."/>
            <person name="Goltry L."/>
            <person name="Tolentino E."/>
            <person name="Westbrock-Wadman S."/>
            <person name="Yuan Y."/>
            <person name="Brody L.L."/>
            <person name="Coulter S.N."/>
            <person name="Folger K.R."/>
            <person name="Kas A."/>
            <person name="Larbig K."/>
            <person name="Lim R.M."/>
            <person name="Smith K.A."/>
            <person name="Spencer D.H."/>
            <person name="Wong G.K.-S."/>
            <person name="Wu Z."/>
            <person name="Paulsen I.T."/>
            <person name="Reizer J."/>
            <person name="Saier M.H. Jr."/>
            <person name="Hancock R.E.W."/>
            <person name="Lory S."/>
            <person name="Olson M.V."/>
        </authorList>
    </citation>
    <scope>NUCLEOTIDE SEQUENCE [LARGE SCALE GENOMIC DNA]</scope>
    <source>
        <strain>ATCC 15692 / DSM 22644 / CIP 104116 / JCM 14847 / LMG 12228 / 1C / PRS 101 / PAO1</strain>
    </source>
</reference>
<reference key="3">
    <citation type="journal article" date="1993" name="Biochem. Biophys. Res. Commun.">
        <title>Pseudomonas aeruginosa contains an IHF-like protein that binds to the algD promoter.</title>
        <authorList>
            <person name="Toussaint B."/>
            <person name="Delic-Attree I."/>
            <person name="Vignais P.M."/>
        </authorList>
    </citation>
    <scope>PROTEIN SEQUENCE OF 2-16</scope>
    <source>
        <strain>CHA</strain>
    </source>
</reference>
<name>IHFA_PSEAE</name>
<evidence type="ECO:0000250" key="1"/>
<evidence type="ECO:0000256" key="2">
    <source>
        <dbReference type="SAM" id="MobiDB-lite"/>
    </source>
</evidence>
<evidence type="ECO:0000269" key="3">
    <source>
    </source>
</evidence>
<evidence type="ECO:0000305" key="4"/>
<sequence>MGALTKAEIAERLYEELGLNKREAKELVELFFEEIRQALEHNEQVKLSGFGNFDLRDKRQRPGRNPKTGEEIPITARRVVTFRPGQKLKARVEAYAGTKS</sequence>
<accession>Q51472</accession>
<dbReference type="EMBL" id="L35258">
    <property type="protein sequence ID" value="AAA65949.1"/>
    <property type="molecule type" value="Genomic_DNA"/>
</dbReference>
<dbReference type="EMBL" id="AE004091">
    <property type="protein sequence ID" value="AAG06126.1"/>
    <property type="molecule type" value="Genomic_DNA"/>
</dbReference>
<dbReference type="PIR" id="JC4062">
    <property type="entry name" value="JC4062"/>
</dbReference>
<dbReference type="RefSeq" id="NP_251428.1">
    <property type="nucleotide sequence ID" value="NC_002516.2"/>
</dbReference>
<dbReference type="RefSeq" id="WP_003090661.1">
    <property type="nucleotide sequence ID" value="NZ_QZGE01000011.1"/>
</dbReference>
<dbReference type="SMR" id="Q51472"/>
<dbReference type="FunCoup" id="Q51472">
    <property type="interactions" value="241"/>
</dbReference>
<dbReference type="STRING" id="208964.PA2738"/>
<dbReference type="PaxDb" id="208964-PA2738"/>
<dbReference type="DNASU" id="882954"/>
<dbReference type="GeneID" id="79913052"/>
<dbReference type="GeneID" id="882954"/>
<dbReference type="KEGG" id="pae:PA2738"/>
<dbReference type="PATRIC" id="fig|208964.12.peg.2863"/>
<dbReference type="PseudoCAP" id="PA2738"/>
<dbReference type="HOGENOM" id="CLU_105066_1_3_6"/>
<dbReference type="InParanoid" id="Q51472"/>
<dbReference type="OrthoDB" id="9797747at2"/>
<dbReference type="PhylomeDB" id="Q51472"/>
<dbReference type="BioCyc" id="PAER208964:G1FZ6-2777-MONOMER"/>
<dbReference type="Proteomes" id="UP000002438">
    <property type="component" value="Chromosome"/>
</dbReference>
<dbReference type="CollecTF" id="EXPREG_00000e50"/>
<dbReference type="GO" id="GO:0005829">
    <property type="term" value="C:cytosol"/>
    <property type="evidence" value="ECO:0000318"/>
    <property type="project" value="GO_Central"/>
</dbReference>
<dbReference type="GO" id="GO:0032993">
    <property type="term" value="C:protein-DNA complex"/>
    <property type="evidence" value="ECO:0000315"/>
    <property type="project" value="CollecTF"/>
</dbReference>
<dbReference type="GO" id="GO:0003677">
    <property type="term" value="F:DNA binding"/>
    <property type="evidence" value="ECO:0000318"/>
    <property type="project" value="GO_Central"/>
</dbReference>
<dbReference type="GO" id="GO:0001216">
    <property type="term" value="F:DNA-binding transcription activator activity"/>
    <property type="evidence" value="ECO:0000315"/>
    <property type="project" value="CollecTF"/>
</dbReference>
<dbReference type="GO" id="GO:0030527">
    <property type="term" value="F:structural constituent of chromatin"/>
    <property type="evidence" value="ECO:0007669"/>
    <property type="project" value="InterPro"/>
</dbReference>
<dbReference type="GO" id="GO:0000976">
    <property type="term" value="F:transcription cis-regulatory region binding"/>
    <property type="evidence" value="ECO:0000315"/>
    <property type="project" value="CollecTF"/>
</dbReference>
<dbReference type="GO" id="GO:0006310">
    <property type="term" value="P:DNA recombination"/>
    <property type="evidence" value="ECO:0007669"/>
    <property type="project" value="UniProtKB-UniRule"/>
</dbReference>
<dbReference type="GO" id="GO:0045893">
    <property type="term" value="P:positive regulation of DNA-templated transcription"/>
    <property type="evidence" value="ECO:0000270"/>
    <property type="project" value="CollecTF"/>
</dbReference>
<dbReference type="GO" id="GO:0006417">
    <property type="term" value="P:regulation of translation"/>
    <property type="evidence" value="ECO:0007669"/>
    <property type="project" value="UniProtKB-UniRule"/>
</dbReference>
<dbReference type="CDD" id="cd13835">
    <property type="entry name" value="IHF_A"/>
    <property type="match status" value="1"/>
</dbReference>
<dbReference type="FunFam" id="4.10.520.10:FF:000002">
    <property type="entry name" value="Integration host factor subunit alpha"/>
    <property type="match status" value="1"/>
</dbReference>
<dbReference type="Gene3D" id="4.10.520.10">
    <property type="entry name" value="IHF-like DNA-binding proteins"/>
    <property type="match status" value="1"/>
</dbReference>
<dbReference type="HAMAP" id="MF_00380">
    <property type="entry name" value="IHF_alpha"/>
    <property type="match status" value="1"/>
</dbReference>
<dbReference type="InterPro" id="IPR000119">
    <property type="entry name" value="Hist_DNA-bd"/>
</dbReference>
<dbReference type="InterPro" id="IPR020816">
    <property type="entry name" value="Histone-like_DNA-bd_CS"/>
</dbReference>
<dbReference type="InterPro" id="IPR010992">
    <property type="entry name" value="IHF-like_DNA-bd_dom_sf"/>
</dbReference>
<dbReference type="InterPro" id="IPR005684">
    <property type="entry name" value="IHF_alpha"/>
</dbReference>
<dbReference type="NCBIfam" id="TIGR00987">
    <property type="entry name" value="himA"/>
    <property type="match status" value="1"/>
</dbReference>
<dbReference type="NCBIfam" id="NF001401">
    <property type="entry name" value="PRK00285.1"/>
    <property type="match status" value="1"/>
</dbReference>
<dbReference type="PANTHER" id="PTHR33175">
    <property type="entry name" value="DNA-BINDING PROTEIN HU"/>
    <property type="match status" value="1"/>
</dbReference>
<dbReference type="PANTHER" id="PTHR33175:SF2">
    <property type="entry name" value="INTEGRATION HOST FACTOR SUBUNIT ALPHA"/>
    <property type="match status" value="1"/>
</dbReference>
<dbReference type="Pfam" id="PF00216">
    <property type="entry name" value="Bac_DNA_binding"/>
    <property type="match status" value="1"/>
</dbReference>
<dbReference type="PRINTS" id="PR01727">
    <property type="entry name" value="DNABINDINGHU"/>
</dbReference>
<dbReference type="SMART" id="SM00411">
    <property type="entry name" value="BHL"/>
    <property type="match status" value="1"/>
</dbReference>
<dbReference type="SUPFAM" id="SSF47729">
    <property type="entry name" value="IHF-like DNA-binding proteins"/>
    <property type="match status" value="1"/>
</dbReference>
<dbReference type="PROSITE" id="PS00045">
    <property type="entry name" value="HISTONE_LIKE"/>
    <property type="match status" value="1"/>
</dbReference>
<feature type="initiator methionine" description="Removed" evidence="3">
    <location>
        <position position="1"/>
    </location>
</feature>
<feature type="chain" id="PRO_0000105017" description="Integration host factor subunit alpha">
    <location>
        <begin position="2"/>
        <end position="100"/>
    </location>
</feature>
<feature type="region of interest" description="Disordered" evidence="2">
    <location>
        <begin position="54"/>
        <end position="73"/>
    </location>
</feature>
<organism>
    <name type="scientific">Pseudomonas aeruginosa (strain ATCC 15692 / DSM 22644 / CIP 104116 / JCM 14847 / LMG 12228 / 1C / PRS 101 / PAO1)</name>
    <dbReference type="NCBI Taxonomy" id="208964"/>
    <lineage>
        <taxon>Bacteria</taxon>
        <taxon>Pseudomonadati</taxon>
        <taxon>Pseudomonadota</taxon>
        <taxon>Gammaproteobacteria</taxon>
        <taxon>Pseudomonadales</taxon>
        <taxon>Pseudomonadaceae</taxon>
        <taxon>Pseudomonas</taxon>
    </lineage>
</organism>
<gene>
    <name type="primary">ihfA</name>
    <name type="synonym">himA</name>
    <name type="ordered locus">PA2738</name>
</gene>
<protein>
    <recommendedName>
        <fullName>Integration host factor subunit alpha</fullName>
        <shortName>IHF-alpha</shortName>
    </recommendedName>
</protein>
<comment type="function">
    <text evidence="1">This protein is one of the two subunits of integration host factor, a specific DNA-binding protein that functions in genetic recombination as well as in transcriptional and translational control.</text>
</comment>
<comment type="subunit">
    <text>Heterodimer of an alpha and a beta chain.</text>
</comment>
<comment type="miscellaneous">
    <text>In vitro, binds to the algD promoter.</text>
</comment>
<comment type="similarity">
    <text evidence="4">Belongs to the bacterial histone-like protein family.</text>
</comment>